<name>LIPA_ESCF3</name>
<reference key="1">
    <citation type="journal article" date="2009" name="PLoS Genet.">
        <title>Organised genome dynamics in the Escherichia coli species results in highly diverse adaptive paths.</title>
        <authorList>
            <person name="Touchon M."/>
            <person name="Hoede C."/>
            <person name="Tenaillon O."/>
            <person name="Barbe V."/>
            <person name="Baeriswyl S."/>
            <person name="Bidet P."/>
            <person name="Bingen E."/>
            <person name="Bonacorsi S."/>
            <person name="Bouchier C."/>
            <person name="Bouvet O."/>
            <person name="Calteau A."/>
            <person name="Chiapello H."/>
            <person name="Clermont O."/>
            <person name="Cruveiller S."/>
            <person name="Danchin A."/>
            <person name="Diard M."/>
            <person name="Dossat C."/>
            <person name="Karoui M.E."/>
            <person name="Frapy E."/>
            <person name="Garry L."/>
            <person name="Ghigo J.M."/>
            <person name="Gilles A.M."/>
            <person name="Johnson J."/>
            <person name="Le Bouguenec C."/>
            <person name="Lescat M."/>
            <person name="Mangenot S."/>
            <person name="Martinez-Jehanne V."/>
            <person name="Matic I."/>
            <person name="Nassif X."/>
            <person name="Oztas S."/>
            <person name="Petit M.A."/>
            <person name="Pichon C."/>
            <person name="Rouy Z."/>
            <person name="Ruf C.S."/>
            <person name="Schneider D."/>
            <person name="Tourret J."/>
            <person name="Vacherie B."/>
            <person name="Vallenet D."/>
            <person name="Medigue C."/>
            <person name="Rocha E.P.C."/>
            <person name="Denamur E."/>
        </authorList>
    </citation>
    <scope>NUCLEOTIDE SEQUENCE [LARGE SCALE GENOMIC DNA]</scope>
    <source>
        <strain>ATCC 35469 / DSM 13698 / BCRC 15582 / CCUG 18766 / IAM 14443 / JCM 21226 / LMG 7866 / NBRC 102419 / NCTC 12128 / CDC 0568-73</strain>
    </source>
</reference>
<proteinExistence type="inferred from homology"/>
<accession>B7LLI3</accession>
<evidence type="ECO:0000255" key="1">
    <source>
        <dbReference type="HAMAP-Rule" id="MF_00206"/>
    </source>
</evidence>
<evidence type="ECO:0000255" key="2">
    <source>
        <dbReference type="PROSITE-ProRule" id="PRU01266"/>
    </source>
</evidence>
<sequence length="321" mass="36055">MSKPIVMERGVKYRDADKMALIPVKNVVTEREALLRKPEWMKIKLPADSTRIQGIKAAMRKNGLHSVCEEASCPNLAECFNHGTATFMILGAICTRRCPFCDVAHGRPVAPDANEPVKLAQTIADMALRYVVITSVDRDDLRDGGAQHFADCITAIREKSPSIKIETLVPDFRGRMDRALDILTATPPDVFNHNLENVPRIYRQVRPGADYNWSLKLLERFKEAHPEIPTKSGLMVGLGETNEEIIEVMRDLRRHGVTMLTLGQYLQPSRHHLPVQRYVSPDEFEEMKAEALAMGFTHAACGPFVRSSYHADLQAKGIEVK</sequence>
<protein>
    <recommendedName>
        <fullName evidence="1">Lipoyl synthase</fullName>
        <ecNumber evidence="1">2.8.1.8</ecNumber>
    </recommendedName>
    <alternativeName>
        <fullName evidence="1">Lip-syn</fullName>
        <shortName evidence="1">LS</shortName>
    </alternativeName>
    <alternativeName>
        <fullName evidence="1">Lipoate synthase</fullName>
    </alternativeName>
    <alternativeName>
        <fullName evidence="1">Lipoic acid synthase</fullName>
    </alternativeName>
    <alternativeName>
        <fullName evidence="1">Sulfur insertion protein LipA</fullName>
    </alternativeName>
</protein>
<organism>
    <name type="scientific">Escherichia fergusonii (strain ATCC 35469 / DSM 13698 / CCUG 18766 / IAM 14443 / JCM 21226 / LMG 7866 / NBRC 102419 / NCTC 12128 / CDC 0568-73)</name>
    <dbReference type="NCBI Taxonomy" id="585054"/>
    <lineage>
        <taxon>Bacteria</taxon>
        <taxon>Pseudomonadati</taxon>
        <taxon>Pseudomonadota</taxon>
        <taxon>Gammaproteobacteria</taxon>
        <taxon>Enterobacterales</taxon>
        <taxon>Enterobacteriaceae</taxon>
        <taxon>Escherichia</taxon>
    </lineage>
</organism>
<feature type="chain" id="PRO_1000191453" description="Lipoyl synthase">
    <location>
        <begin position="1"/>
        <end position="321"/>
    </location>
</feature>
<feature type="domain" description="Radical SAM core" evidence="2">
    <location>
        <begin position="80"/>
        <end position="297"/>
    </location>
</feature>
<feature type="binding site" evidence="1">
    <location>
        <position position="68"/>
    </location>
    <ligand>
        <name>[4Fe-4S] cluster</name>
        <dbReference type="ChEBI" id="CHEBI:49883"/>
        <label>1</label>
    </ligand>
</feature>
<feature type="binding site" evidence="1">
    <location>
        <position position="73"/>
    </location>
    <ligand>
        <name>[4Fe-4S] cluster</name>
        <dbReference type="ChEBI" id="CHEBI:49883"/>
        <label>1</label>
    </ligand>
</feature>
<feature type="binding site" evidence="1">
    <location>
        <position position="79"/>
    </location>
    <ligand>
        <name>[4Fe-4S] cluster</name>
        <dbReference type="ChEBI" id="CHEBI:49883"/>
        <label>1</label>
    </ligand>
</feature>
<feature type="binding site" evidence="1">
    <location>
        <position position="94"/>
    </location>
    <ligand>
        <name>[4Fe-4S] cluster</name>
        <dbReference type="ChEBI" id="CHEBI:49883"/>
        <label>2</label>
        <note>4Fe-4S-S-AdoMet</note>
    </ligand>
</feature>
<feature type="binding site" evidence="1">
    <location>
        <position position="98"/>
    </location>
    <ligand>
        <name>[4Fe-4S] cluster</name>
        <dbReference type="ChEBI" id="CHEBI:49883"/>
        <label>2</label>
        <note>4Fe-4S-S-AdoMet</note>
    </ligand>
</feature>
<feature type="binding site" evidence="1">
    <location>
        <position position="101"/>
    </location>
    <ligand>
        <name>[4Fe-4S] cluster</name>
        <dbReference type="ChEBI" id="CHEBI:49883"/>
        <label>2</label>
        <note>4Fe-4S-S-AdoMet</note>
    </ligand>
</feature>
<feature type="binding site" evidence="1">
    <location>
        <position position="308"/>
    </location>
    <ligand>
        <name>[4Fe-4S] cluster</name>
        <dbReference type="ChEBI" id="CHEBI:49883"/>
        <label>1</label>
    </ligand>
</feature>
<comment type="function">
    <text evidence="1">Catalyzes the radical-mediated insertion of two sulfur atoms into the C-6 and C-8 positions of the octanoyl moiety bound to the lipoyl domains of lipoate-dependent enzymes, thereby converting the octanoylated domains into lipoylated derivatives.</text>
</comment>
<comment type="catalytic activity">
    <reaction evidence="1">
        <text>[[Fe-S] cluster scaffold protein carrying a second [4Fe-4S](2+) cluster] + N(6)-octanoyl-L-lysyl-[protein] + 2 oxidized [2Fe-2S]-[ferredoxin] + 2 S-adenosyl-L-methionine + 4 H(+) = [[Fe-S] cluster scaffold protein] + N(6)-[(R)-dihydrolipoyl]-L-lysyl-[protein] + 4 Fe(3+) + 2 hydrogen sulfide + 2 5'-deoxyadenosine + 2 L-methionine + 2 reduced [2Fe-2S]-[ferredoxin]</text>
        <dbReference type="Rhea" id="RHEA:16585"/>
        <dbReference type="Rhea" id="RHEA-COMP:9928"/>
        <dbReference type="Rhea" id="RHEA-COMP:10000"/>
        <dbReference type="Rhea" id="RHEA-COMP:10001"/>
        <dbReference type="Rhea" id="RHEA-COMP:10475"/>
        <dbReference type="Rhea" id="RHEA-COMP:14568"/>
        <dbReference type="Rhea" id="RHEA-COMP:14569"/>
        <dbReference type="ChEBI" id="CHEBI:15378"/>
        <dbReference type="ChEBI" id="CHEBI:17319"/>
        <dbReference type="ChEBI" id="CHEBI:29034"/>
        <dbReference type="ChEBI" id="CHEBI:29919"/>
        <dbReference type="ChEBI" id="CHEBI:33722"/>
        <dbReference type="ChEBI" id="CHEBI:33737"/>
        <dbReference type="ChEBI" id="CHEBI:33738"/>
        <dbReference type="ChEBI" id="CHEBI:57844"/>
        <dbReference type="ChEBI" id="CHEBI:59789"/>
        <dbReference type="ChEBI" id="CHEBI:78809"/>
        <dbReference type="ChEBI" id="CHEBI:83100"/>
        <dbReference type="EC" id="2.8.1.8"/>
    </reaction>
</comment>
<comment type="cofactor">
    <cofactor evidence="1">
        <name>[4Fe-4S] cluster</name>
        <dbReference type="ChEBI" id="CHEBI:49883"/>
    </cofactor>
    <text evidence="1">Binds 2 [4Fe-4S] clusters per subunit. One cluster is coordinated with 3 cysteines and an exchangeable S-adenosyl-L-methionine.</text>
</comment>
<comment type="pathway">
    <text evidence="1">Protein modification; protein lipoylation via endogenous pathway; protein N(6)-(lipoyl)lysine from octanoyl-[acyl-carrier-protein]: step 2/2.</text>
</comment>
<comment type="subcellular location">
    <subcellularLocation>
        <location evidence="1">Cytoplasm</location>
    </subcellularLocation>
</comment>
<comment type="similarity">
    <text evidence="1">Belongs to the radical SAM superfamily. Lipoyl synthase family.</text>
</comment>
<keyword id="KW-0004">4Fe-4S</keyword>
<keyword id="KW-0963">Cytoplasm</keyword>
<keyword id="KW-0408">Iron</keyword>
<keyword id="KW-0411">Iron-sulfur</keyword>
<keyword id="KW-0479">Metal-binding</keyword>
<keyword id="KW-0949">S-adenosyl-L-methionine</keyword>
<keyword id="KW-0808">Transferase</keyword>
<gene>
    <name evidence="1" type="primary">lipA</name>
    <name type="ordered locus">EFER_2476</name>
</gene>
<dbReference type="EC" id="2.8.1.8" evidence="1"/>
<dbReference type="EMBL" id="CU928158">
    <property type="protein sequence ID" value="CAQ89973.1"/>
    <property type="molecule type" value="Genomic_DNA"/>
</dbReference>
<dbReference type="RefSeq" id="WP_000042647.1">
    <property type="nucleotide sequence ID" value="NC_011740.1"/>
</dbReference>
<dbReference type="SMR" id="B7LLI3"/>
<dbReference type="GeneID" id="75056488"/>
<dbReference type="KEGG" id="efe:EFER_2476"/>
<dbReference type="HOGENOM" id="CLU_033144_2_1_6"/>
<dbReference type="OrthoDB" id="9787898at2"/>
<dbReference type="UniPathway" id="UPA00538">
    <property type="reaction ID" value="UER00593"/>
</dbReference>
<dbReference type="Proteomes" id="UP000000745">
    <property type="component" value="Chromosome"/>
</dbReference>
<dbReference type="GO" id="GO:0005737">
    <property type="term" value="C:cytoplasm"/>
    <property type="evidence" value="ECO:0007669"/>
    <property type="project" value="UniProtKB-SubCell"/>
</dbReference>
<dbReference type="GO" id="GO:0051539">
    <property type="term" value="F:4 iron, 4 sulfur cluster binding"/>
    <property type="evidence" value="ECO:0007669"/>
    <property type="project" value="UniProtKB-UniRule"/>
</dbReference>
<dbReference type="GO" id="GO:0016992">
    <property type="term" value="F:lipoate synthase activity"/>
    <property type="evidence" value="ECO:0007669"/>
    <property type="project" value="UniProtKB-UniRule"/>
</dbReference>
<dbReference type="GO" id="GO:0046872">
    <property type="term" value="F:metal ion binding"/>
    <property type="evidence" value="ECO:0007669"/>
    <property type="project" value="UniProtKB-KW"/>
</dbReference>
<dbReference type="CDD" id="cd01335">
    <property type="entry name" value="Radical_SAM"/>
    <property type="match status" value="1"/>
</dbReference>
<dbReference type="FunFam" id="3.20.20.70:FF:000023">
    <property type="entry name" value="Lipoyl synthase"/>
    <property type="match status" value="1"/>
</dbReference>
<dbReference type="Gene3D" id="3.20.20.70">
    <property type="entry name" value="Aldolase class I"/>
    <property type="match status" value="1"/>
</dbReference>
<dbReference type="HAMAP" id="MF_00206">
    <property type="entry name" value="Lipoyl_synth"/>
    <property type="match status" value="1"/>
</dbReference>
<dbReference type="InterPro" id="IPR013785">
    <property type="entry name" value="Aldolase_TIM"/>
</dbReference>
<dbReference type="InterPro" id="IPR006638">
    <property type="entry name" value="Elp3/MiaA/NifB-like_rSAM"/>
</dbReference>
<dbReference type="InterPro" id="IPR031691">
    <property type="entry name" value="LIAS_N"/>
</dbReference>
<dbReference type="InterPro" id="IPR003698">
    <property type="entry name" value="Lipoyl_synth"/>
</dbReference>
<dbReference type="InterPro" id="IPR007197">
    <property type="entry name" value="rSAM"/>
</dbReference>
<dbReference type="NCBIfam" id="TIGR00510">
    <property type="entry name" value="lipA"/>
    <property type="match status" value="1"/>
</dbReference>
<dbReference type="NCBIfam" id="NF004019">
    <property type="entry name" value="PRK05481.1"/>
    <property type="match status" value="1"/>
</dbReference>
<dbReference type="NCBIfam" id="NF009544">
    <property type="entry name" value="PRK12928.1"/>
    <property type="match status" value="1"/>
</dbReference>
<dbReference type="PANTHER" id="PTHR10949">
    <property type="entry name" value="LIPOYL SYNTHASE"/>
    <property type="match status" value="1"/>
</dbReference>
<dbReference type="PANTHER" id="PTHR10949:SF0">
    <property type="entry name" value="LIPOYL SYNTHASE, MITOCHONDRIAL"/>
    <property type="match status" value="1"/>
</dbReference>
<dbReference type="Pfam" id="PF16881">
    <property type="entry name" value="LIAS_N"/>
    <property type="match status" value="1"/>
</dbReference>
<dbReference type="Pfam" id="PF04055">
    <property type="entry name" value="Radical_SAM"/>
    <property type="match status" value="1"/>
</dbReference>
<dbReference type="PIRSF" id="PIRSF005963">
    <property type="entry name" value="Lipoyl_synth"/>
    <property type="match status" value="1"/>
</dbReference>
<dbReference type="SFLD" id="SFLDF00271">
    <property type="entry name" value="lipoyl_synthase"/>
    <property type="match status" value="1"/>
</dbReference>
<dbReference type="SFLD" id="SFLDG01058">
    <property type="entry name" value="lipoyl_synthase_like"/>
    <property type="match status" value="1"/>
</dbReference>
<dbReference type="SMART" id="SM00729">
    <property type="entry name" value="Elp3"/>
    <property type="match status" value="1"/>
</dbReference>
<dbReference type="SUPFAM" id="SSF102114">
    <property type="entry name" value="Radical SAM enzymes"/>
    <property type="match status" value="1"/>
</dbReference>
<dbReference type="PROSITE" id="PS51918">
    <property type="entry name" value="RADICAL_SAM"/>
    <property type="match status" value="1"/>
</dbReference>